<comment type="function">
    <text evidence="1">One of the primary rRNA binding proteins, it binds directly to 16S rRNA where it nucleates assembly of the body of the 30S subunit.</text>
</comment>
<comment type="function">
    <text evidence="1">With S5 and S12 plays an important role in translational accuracy.</text>
</comment>
<comment type="subunit">
    <text evidence="1">Part of the 30S ribosomal subunit. Contacts protein S5. The interaction surface between S4 and S5 is involved in control of translational fidelity.</text>
</comment>
<comment type="similarity">
    <text evidence="1">Belongs to the universal ribosomal protein uS4 family.</text>
</comment>
<name>RS4_MESH2</name>
<proteinExistence type="inferred from homology"/>
<reference key="1">
    <citation type="journal article" date="2004" name="J. Bacteriol.">
        <title>The genome sequence of Mycoplasma hyopneumoniae strain 232, the agent of swine mycoplasmosis.</title>
        <authorList>
            <person name="Minion F.C."/>
            <person name="Lefkowitz E.J."/>
            <person name="Madsen M.L."/>
            <person name="Cleary B.J."/>
            <person name="Swartzell S.M."/>
            <person name="Mahairas G.G."/>
        </authorList>
    </citation>
    <scope>NUCLEOTIDE SEQUENCE [LARGE SCALE GENOMIC DNA]</scope>
    <source>
        <strain>232</strain>
    </source>
</reference>
<dbReference type="EMBL" id="AE017332">
    <property type="protein sequence ID" value="AAV27627.1"/>
    <property type="molecule type" value="Genomic_DNA"/>
</dbReference>
<dbReference type="RefSeq" id="WP_011206424.1">
    <property type="nucleotide sequence ID" value="NC_006360.1"/>
</dbReference>
<dbReference type="SMR" id="Q5ZZW4"/>
<dbReference type="GeneID" id="41334874"/>
<dbReference type="KEGG" id="mhy:mhp593"/>
<dbReference type="eggNOG" id="COG0522">
    <property type="taxonomic scope" value="Bacteria"/>
</dbReference>
<dbReference type="HOGENOM" id="CLU_092403_0_1_14"/>
<dbReference type="PhylomeDB" id="Q5ZZW4"/>
<dbReference type="Proteomes" id="UP000006822">
    <property type="component" value="Chromosome"/>
</dbReference>
<dbReference type="GO" id="GO:0015935">
    <property type="term" value="C:small ribosomal subunit"/>
    <property type="evidence" value="ECO:0007669"/>
    <property type="project" value="InterPro"/>
</dbReference>
<dbReference type="GO" id="GO:0019843">
    <property type="term" value="F:rRNA binding"/>
    <property type="evidence" value="ECO:0007669"/>
    <property type="project" value="UniProtKB-UniRule"/>
</dbReference>
<dbReference type="GO" id="GO:0003735">
    <property type="term" value="F:structural constituent of ribosome"/>
    <property type="evidence" value="ECO:0007669"/>
    <property type="project" value="InterPro"/>
</dbReference>
<dbReference type="GO" id="GO:0042274">
    <property type="term" value="P:ribosomal small subunit biogenesis"/>
    <property type="evidence" value="ECO:0007669"/>
    <property type="project" value="TreeGrafter"/>
</dbReference>
<dbReference type="GO" id="GO:0006412">
    <property type="term" value="P:translation"/>
    <property type="evidence" value="ECO:0007669"/>
    <property type="project" value="UniProtKB-UniRule"/>
</dbReference>
<dbReference type="CDD" id="cd00165">
    <property type="entry name" value="S4"/>
    <property type="match status" value="1"/>
</dbReference>
<dbReference type="FunFam" id="3.10.290.10:FF:000001">
    <property type="entry name" value="30S ribosomal protein S4"/>
    <property type="match status" value="1"/>
</dbReference>
<dbReference type="Gene3D" id="1.10.1050.10">
    <property type="entry name" value="Ribosomal Protein S4 Delta 41, Chain A, domain 1"/>
    <property type="match status" value="1"/>
</dbReference>
<dbReference type="Gene3D" id="3.10.290.10">
    <property type="entry name" value="RNA-binding S4 domain"/>
    <property type="match status" value="1"/>
</dbReference>
<dbReference type="HAMAP" id="MF_01306_B">
    <property type="entry name" value="Ribosomal_uS4_B"/>
    <property type="match status" value="1"/>
</dbReference>
<dbReference type="InterPro" id="IPR022801">
    <property type="entry name" value="Ribosomal_uS4"/>
</dbReference>
<dbReference type="InterPro" id="IPR005709">
    <property type="entry name" value="Ribosomal_uS4_bac-type"/>
</dbReference>
<dbReference type="InterPro" id="IPR018079">
    <property type="entry name" value="Ribosomal_uS4_CS"/>
</dbReference>
<dbReference type="InterPro" id="IPR001912">
    <property type="entry name" value="Ribosomal_uS4_N"/>
</dbReference>
<dbReference type="InterPro" id="IPR002942">
    <property type="entry name" value="S4_RNA-bd"/>
</dbReference>
<dbReference type="InterPro" id="IPR036986">
    <property type="entry name" value="S4_RNA-bd_sf"/>
</dbReference>
<dbReference type="NCBIfam" id="NF003717">
    <property type="entry name" value="PRK05327.1"/>
    <property type="match status" value="1"/>
</dbReference>
<dbReference type="NCBIfam" id="TIGR01017">
    <property type="entry name" value="rpsD_bact"/>
    <property type="match status" value="1"/>
</dbReference>
<dbReference type="PANTHER" id="PTHR11831">
    <property type="entry name" value="30S 40S RIBOSOMAL PROTEIN"/>
    <property type="match status" value="1"/>
</dbReference>
<dbReference type="PANTHER" id="PTHR11831:SF4">
    <property type="entry name" value="SMALL RIBOSOMAL SUBUNIT PROTEIN US4M"/>
    <property type="match status" value="1"/>
</dbReference>
<dbReference type="Pfam" id="PF00163">
    <property type="entry name" value="Ribosomal_S4"/>
    <property type="match status" value="1"/>
</dbReference>
<dbReference type="Pfam" id="PF01479">
    <property type="entry name" value="S4"/>
    <property type="match status" value="1"/>
</dbReference>
<dbReference type="SMART" id="SM01390">
    <property type="entry name" value="Ribosomal_S4"/>
    <property type="match status" value="1"/>
</dbReference>
<dbReference type="SMART" id="SM00363">
    <property type="entry name" value="S4"/>
    <property type="match status" value="1"/>
</dbReference>
<dbReference type="SUPFAM" id="SSF55174">
    <property type="entry name" value="Alpha-L RNA-binding motif"/>
    <property type="match status" value="1"/>
</dbReference>
<dbReference type="PROSITE" id="PS00632">
    <property type="entry name" value="RIBOSOMAL_S4"/>
    <property type="match status" value="1"/>
</dbReference>
<dbReference type="PROSITE" id="PS50889">
    <property type="entry name" value="S4"/>
    <property type="match status" value="1"/>
</dbReference>
<keyword id="KW-0687">Ribonucleoprotein</keyword>
<keyword id="KW-0689">Ribosomal protein</keyword>
<keyword id="KW-0694">RNA-binding</keyword>
<keyword id="KW-0699">rRNA-binding</keyword>
<sequence length="205" mass="23967">MSRYTGSIFRKSRRLGFSILETGKEFAKGKQRRYAPGLHGLRRSKPSDYGVHLREKQKVRFMYGLSEKQFRNTYRKATKKTGIAGTLFLQALESRLDNSVYRAGFAETRRQARQLVNHGHFLVNNKKVDIPSFQLKQGDIFELTTRKDGKIRKNQQILTSLETRTPAAWLEVDKDNFKVVFNRMPERSELNQEIKESLIVEFYSK</sequence>
<feature type="chain" id="PRO_0000132414" description="Small ribosomal subunit protein uS4">
    <location>
        <begin position="1"/>
        <end position="205"/>
    </location>
</feature>
<feature type="domain" description="S4 RNA-binding" evidence="1">
    <location>
        <begin position="94"/>
        <end position="154"/>
    </location>
</feature>
<evidence type="ECO:0000255" key="1">
    <source>
        <dbReference type="HAMAP-Rule" id="MF_01306"/>
    </source>
</evidence>
<evidence type="ECO:0000305" key="2"/>
<gene>
    <name evidence="1" type="primary">rpsD</name>
    <name type="ordered locus">mhp593</name>
</gene>
<accession>Q5ZZW4</accession>
<organism>
    <name type="scientific">Mesomycoplasma hyopneumoniae (strain 232)</name>
    <name type="common">Mycoplasma hyopneumoniae</name>
    <dbReference type="NCBI Taxonomy" id="295358"/>
    <lineage>
        <taxon>Bacteria</taxon>
        <taxon>Bacillati</taxon>
        <taxon>Mycoplasmatota</taxon>
        <taxon>Mycoplasmoidales</taxon>
        <taxon>Metamycoplasmataceae</taxon>
        <taxon>Mesomycoplasma</taxon>
    </lineage>
</organism>
<protein>
    <recommendedName>
        <fullName evidence="1">Small ribosomal subunit protein uS4</fullName>
    </recommendedName>
    <alternativeName>
        <fullName evidence="2">30S ribosomal protein S4</fullName>
    </alternativeName>
</protein>